<accession>Q5M905</accession>
<proteinExistence type="evidence at transcript level"/>
<sequence length="305" mass="33777">MEFAGKRLKGLIAATFTPMTSNSDINLPVIKQYVDYLVQKQHVRNIFVNGTTGEGMSLSVQERKCLAEEWVKQARGKMDNVIIHVGCLSLSDSKDLAAHAASCGADAISIVCPSFLKPSSLDALVLYMKEVAFAAPSLPFYYYHIPRLTGTTYQICELLRKAKENIPSFRGVKFTDVNLMDFGLCVSQYKEFDCLYGVDEQLLGALAFGAHGAVGSTYNYLGKKNGDMMAAFEGGNLQEARKIQCSLQEFLLFVFDMGWGLPEFKDIMSQISGIPLGPPRLPLYSSVKSDHHDSIRTKMLKLDLI</sequence>
<comment type="function">
    <text evidence="3">Catalyzes the cleavage of N-acetylneuraminic acid (sialic acid) to form pyruvate and N-acetylmannosamine via a Schiff base intermediate. It prevents sialic acids from being recycled and returning to the cell surface. Involved in the N-glycolylneuraminic acid (Neu5Gc) degradation pathway.</text>
</comment>
<comment type="catalytic activity">
    <reaction evidence="3">
        <text>aceneuramate = aldehydo-N-acetyl-D-mannosamine + pyruvate</text>
        <dbReference type="Rhea" id="RHEA:23296"/>
        <dbReference type="ChEBI" id="CHEBI:15361"/>
        <dbReference type="ChEBI" id="CHEBI:17122"/>
        <dbReference type="ChEBI" id="CHEBI:173083"/>
        <dbReference type="EC" id="4.1.3.3"/>
    </reaction>
</comment>
<comment type="pathway">
    <text evidence="3">Amino-sugar metabolism; N-acetylneuraminate degradation.</text>
</comment>
<comment type="subunit">
    <text evidence="3">Homotetramer.</text>
</comment>
<comment type="subcellular location">
    <subcellularLocation>
        <location evidence="1">Cytoplasm</location>
    </subcellularLocation>
</comment>
<comment type="similarity">
    <text evidence="4">Belongs to the DapA family. NanA subfamily.</text>
</comment>
<keyword id="KW-0119">Carbohydrate metabolism</keyword>
<keyword id="KW-0963">Cytoplasm</keyword>
<keyword id="KW-0456">Lyase</keyword>
<keyword id="KW-1185">Reference proteome</keyword>
<keyword id="KW-0704">Schiff base</keyword>
<reference key="1">
    <citation type="submission" date="2004-12" db="EMBL/GenBank/DDBJ databases">
        <authorList>
            <consortium name="NIH - Xenopus Gene Collection (XGC) project"/>
        </authorList>
    </citation>
    <scope>NUCLEOTIDE SEQUENCE [LARGE SCALE MRNA]</scope>
</reference>
<dbReference type="EC" id="4.1.3.3" evidence="3"/>
<dbReference type="EMBL" id="BC087756">
    <property type="protein sequence ID" value="AAH87756.1"/>
    <property type="molecule type" value="mRNA"/>
</dbReference>
<dbReference type="RefSeq" id="NP_001011207.1">
    <property type="nucleotide sequence ID" value="NM_001011207.1"/>
</dbReference>
<dbReference type="RefSeq" id="XP_012816446.1">
    <property type="nucleotide sequence ID" value="XM_012960992.2"/>
</dbReference>
<dbReference type="SMR" id="Q5M905"/>
<dbReference type="FunCoup" id="Q5M905">
    <property type="interactions" value="597"/>
</dbReference>
<dbReference type="STRING" id="8364.ENSXETP00000032307"/>
<dbReference type="DNASU" id="496638"/>
<dbReference type="GeneID" id="496638"/>
<dbReference type="KEGG" id="xtr:496638"/>
<dbReference type="AGR" id="Xenbase:XB-GENE-978364"/>
<dbReference type="CTD" id="80896"/>
<dbReference type="Xenbase" id="XB-GENE-978364">
    <property type="gene designation" value="npl"/>
</dbReference>
<dbReference type="InParanoid" id="Q5M905"/>
<dbReference type="OMA" id="YLYHIPP"/>
<dbReference type="OrthoDB" id="191315at2759"/>
<dbReference type="Reactome" id="R-XTR-4085001">
    <property type="pathway name" value="Sialic acid metabolism"/>
</dbReference>
<dbReference type="UniPathway" id="UPA00629"/>
<dbReference type="Proteomes" id="UP000008143">
    <property type="component" value="Chromosome 4"/>
</dbReference>
<dbReference type="Bgee" id="ENSXETG00000012514">
    <property type="expression patterns" value="Expressed in mesonephros and 17 other cell types or tissues"/>
</dbReference>
<dbReference type="ExpressionAtlas" id="Q5M905">
    <property type="expression patterns" value="differential"/>
</dbReference>
<dbReference type="GO" id="GO:0005737">
    <property type="term" value="C:cytoplasm"/>
    <property type="evidence" value="ECO:0007669"/>
    <property type="project" value="UniProtKB-SubCell"/>
</dbReference>
<dbReference type="GO" id="GO:0008747">
    <property type="term" value="F:N-acetylneuraminate lyase activity"/>
    <property type="evidence" value="ECO:0000250"/>
    <property type="project" value="UniProtKB"/>
</dbReference>
<dbReference type="GO" id="GO:0019262">
    <property type="term" value="P:N-acetylneuraminate catabolic process"/>
    <property type="evidence" value="ECO:0000250"/>
    <property type="project" value="UniProtKB"/>
</dbReference>
<dbReference type="FunFam" id="3.20.20.70:FF:000133">
    <property type="entry name" value="N-acetylneuraminate pyruvate lyase"/>
    <property type="match status" value="1"/>
</dbReference>
<dbReference type="Gene3D" id="3.20.20.70">
    <property type="entry name" value="Aldolase class I"/>
    <property type="match status" value="1"/>
</dbReference>
<dbReference type="InterPro" id="IPR013785">
    <property type="entry name" value="Aldolase_TIM"/>
</dbReference>
<dbReference type="InterPro" id="IPR002220">
    <property type="entry name" value="DapA-like"/>
</dbReference>
<dbReference type="PANTHER" id="PTHR12128">
    <property type="entry name" value="DIHYDRODIPICOLINATE SYNTHASE"/>
    <property type="match status" value="1"/>
</dbReference>
<dbReference type="PANTHER" id="PTHR12128:SF21">
    <property type="entry name" value="N-ACETYLNEURAMINATE LYASE"/>
    <property type="match status" value="1"/>
</dbReference>
<dbReference type="Pfam" id="PF00701">
    <property type="entry name" value="DHDPS"/>
    <property type="match status" value="1"/>
</dbReference>
<dbReference type="PIRSF" id="PIRSF001365">
    <property type="entry name" value="DHDPS"/>
    <property type="match status" value="1"/>
</dbReference>
<dbReference type="PRINTS" id="PR00146">
    <property type="entry name" value="DHPICSNTHASE"/>
</dbReference>
<dbReference type="SMART" id="SM01130">
    <property type="entry name" value="DHDPS"/>
    <property type="match status" value="1"/>
</dbReference>
<dbReference type="SUPFAM" id="SSF51569">
    <property type="entry name" value="Aldolase"/>
    <property type="match status" value="1"/>
</dbReference>
<name>NPL_XENTR</name>
<evidence type="ECO:0000250" key="1"/>
<evidence type="ECO:0000250" key="2">
    <source>
        <dbReference type="UniProtKB" id="P0A6L4"/>
    </source>
</evidence>
<evidence type="ECO:0000250" key="3">
    <source>
        <dbReference type="UniProtKB" id="Q9BXD5"/>
    </source>
</evidence>
<evidence type="ECO:0000305" key="4"/>
<gene>
    <name evidence="3" type="primary">npl</name>
</gene>
<protein>
    <recommendedName>
        <fullName evidence="3">N-acetylneuraminate lyase</fullName>
        <shortName>NALase</shortName>
        <ecNumber evidence="3">4.1.3.3</ecNumber>
    </recommendedName>
    <alternativeName>
        <fullName>N-acetylneuraminate pyruvate-lyase</fullName>
    </alternativeName>
    <alternativeName>
        <fullName>N-acetylneuraminic acid aldolase</fullName>
    </alternativeName>
    <alternativeName>
        <fullName>Sialate lyase</fullName>
    </alternativeName>
    <alternativeName>
        <fullName>Sialate-pyruvate lyase</fullName>
    </alternativeName>
    <alternativeName>
        <fullName>Sialic acid aldolase</fullName>
    </alternativeName>
    <alternativeName>
        <fullName>Sialic acid lyase</fullName>
    </alternativeName>
</protein>
<feature type="chain" id="PRO_0000273361" description="N-acetylneuraminate lyase">
    <location>
        <begin position="1"/>
        <end position="305"/>
    </location>
</feature>
<feature type="active site" description="Proton donor" evidence="2">
    <location>
        <position position="143"/>
    </location>
</feature>
<feature type="active site" description="Schiff-base intermediate with substrate" evidence="2">
    <location>
        <position position="173"/>
    </location>
</feature>
<feature type="binding site" evidence="2">
    <location>
        <position position="51"/>
    </location>
    <ligand>
        <name>aceneuramate</name>
        <dbReference type="ChEBI" id="CHEBI:173083"/>
    </ligand>
</feature>
<feature type="binding site" evidence="2">
    <location>
        <position position="52"/>
    </location>
    <ligand>
        <name>aceneuramate</name>
        <dbReference type="ChEBI" id="CHEBI:173083"/>
    </ligand>
</feature>
<feature type="binding site" evidence="2">
    <location>
        <position position="175"/>
    </location>
    <ligand>
        <name>aceneuramate</name>
        <dbReference type="ChEBI" id="CHEBI:173083"/>
    </ligand>
</feature>
<feature type="binding site" evidence="2">
    <location>
        <position position="197"/>
    </location>
    <ligand>
        <name>aceneuramate</name>
        <dbReference type="ChEBI" id="CHEBI:173083"/>
    </ligand>
</feature>
<feature type="binding site" evidence="2">
    <location>
        <position position="199"/>
    </location>
    <ligand>
        <name>aceneuramate</name>
        <dbReference type="ChEBI" id="CHEBI:173083"/>
    </ligand>
</feature>
<feature type="binding site" evidence="2">
    <location>
        <position position="200"/>
    </location>
    <ligand>
        <name>aceneuramate</name>
        <dbReference type="ChEBI" id="CHEBI:173083"/>
    </ligand>
</feature>
<feature type="binding site" evidence="2">
    <location>
        <position position="216"/>
    </location>
    <ligand>
        <name>aceneuramate</name>
        <dbReference type="ChEBI" id="CHEBI:173083"/>
    </ligand>
</feature>
<organism>
    <name type="scientific">Xenopus tropicalis</name>
    <name type="common">Western clawed frog</name>
    <name type="synonym">Silurana tropicalis</name>
    <dbReference type="NCBI Taxonomy" id="8364"/>
    <lineage>
        <taxon>Eukaryota</taxon>
        <taxon>Metazoa</taxon>
        <taxon>Chordata</taxon>
        <taxon>Craniata</taxon>
        <taxon>Vertebrata</taxon>
        <taxon>Euteleostomi</taxon>
        <taxon>Amphibia</taxon>
        <taxon>Batrachia</taxon>
        <taxon>Anura</taxon>
        <taxon>Pipoidea</taxon>
        <taxon>Pipidae</taxon>
        <taxon>Xenopodinae</taxon>
        <taxon>Xenopus</taxon>
        <taxon>Silurana</taxon>
    </lineage>
</organism>